<protein>
    <recommendedName>
        <fullName evidence="2">Hemagglutinin</fullName>
    </recommendedName>
    <component>
        <recommendedName>
            <fullName evidence="2">Hemagglutinin HA1 chain</fullName>
        </recommendedName>
    </component>
    <component>
        <recommendedName>
            <fullName evidence="2">Hemagglutinin HA2 chain</fullName>
        </recommendedName>
    </component>
</protein>
<gene>
    <name evidence="2" type="primary">HA</name>
</gene>
<feature type="signal peptide" evidence="2">
    <location>
        <begin position="1"/>
        <end position="17"/>
    </location>
</feature>
<feature type="chain" id="PRO_0000440467" description="Hemagglutinin" evidence="2">
    <location>
        <begin position="18"/>
        <end position="566"/>
    </location>
</feature>
<feature type="chain" id="PRO_0000372889" description="Hemagglutinin HA1 chain" evidence="2">
    <location>
        <begin position="18"/>
        <end position="343"/>
    </location>
</feature>
<feature type="chain" id="PRO_0000372890" description="Hemagglutinin HA2 chain" evidence="2">
    <location>
        <begin position="345"/>
        <end position="566"/>
    </location>
</feature>
<feature type="topological domain" description="Extracellular" evidence="2">
    <location>
        <begin position="18"/>
        <end position="529"/>
    </location>
</feature>
<feature type="transmembrane region" description="Helical" evidence="2">
    <location>
        <begin position="530"/>
        <end position="550"/>
    </location>
</feature>
<feature type="topological domain" description="Cytoplasmic" evidence="2">
    <location>
        <begin position="551"/>
        <end position="566"/>
    </location>
</feature>
<feature type="site" description="Cleavage; by host" evidence="2">
    <location>
        <begin position="344"/>
        <end position="345"/>
    </location>
</feature>
<feature type="lipid moiety-binding region" description="S-palmitoyl cysteine; by host" evidence="2">
    <location>
        <position position="555"/>
    </location>
</feature>
<feature type="lipid moiety-binding region" description="S-palmitoyl cysteine; by host" evidence="2">
    <location>
        <position position="562"/>
    </location>
</feature>
<feature type="lipid moiety-binding region" description="S-palmitoyl cysteine; by host" evidence="2">
    <location>
        <position position="565"/>
    </location>
</feature>
<feature type="glycosylation site" description="N-linked (GlcNAc...) asparagine; by host" evidence="2">
    <location>
        <position position="27"/>
    </location>
</feature>
<feature type="glycosylation site" description="N-linked (GlcNAc...) asparagine; by host" evidence="2">
    <location>
        <position position="28"/>
    </location>
</feature>
<feature type="glycosylation site" description="N-linked (GlcNAc...) asparagine; by host" evidence="2">
    <location>
        <position position="40"/>
    </location>
</feature>
<feature type="glycosylation site" description="N-linked (GlcNAc...) asparagine; by host" evidence="2">
    <location>
        <position position="104"/>
    </location>
</feature>
<feature type="glycosylation site" description="N-linked (GlcNAc...) asparagine; by host" evidence="2">
    <location>
        <position position="144"/>
    </location>
</feature>
<feature type="glycosylation site" description="N-linked (GlcNAc...) asparagine; by host" evidence="2">
    <location>
        <position position="172"/>
    </location>
</feature>
<feature type="glycosylation site" description="N-linked (GlcNAc...) asparagine; by host" evidence="2">
    <location>
        <position position="177"/>
    </location>
</feature>
<feature type="glycosylation site" description="N-linked (GlcNAc...) asparagine; by host" evidence="2">
    <location>
        <position position="286"/>
    </location>
</feature>
<feature type="glycosylation site" description="N-linked (GlcNAc...) asparagine; by host" evidence="2">
    <location>
        <position position="304"/>
    </location>
</feature>
<feature type="glycosylation site" description="N-linked (GlcNAc...) asparagine; by host" evidence="2">
    <location>
        <position position="498"/>
    </location>
</feature>
<feature type="disulfide bond" description="Interchain (between HA1 and HA2 chains)" evidence="2">
    <location>
        <begin position="21"/>
        <end position="481"/>
    </location>
</feature>
<feature type="disulfide bond" evidence="2">
    <location>
        <begin position="59"/>
        <end position="292"/>
    </location>
</feature>
<feature type="disulfide bond" evidence="2">
    <location>
        <begin position="72"/>
        <end position="84"/>
    </location>
</feature>
<feature type="disulfide bond" evidence="2">
    <location>
        <begin position="107"/>
        <end position="153"/>
    </location>
</feature>
<feature type="disulfide bond" evidence="2">
    <location>
        <begin position="296"/>
        <end position="320"/>
    </location>
</feature>
<feature type="disulfide bond" evidence="2">
    <location>
        <begin position="488"/>
        <end position="492"/>
    </location>
</feature>
<evidence type="ECO:0000250" key="1">
    <source>
        <dbReference type="UniProtKB" id="Q289M7"/>
    </source>
</evidence>
<evidence type="ECO:0000255" key="2">
    <source>
        <dbReference type="HAMAP-Rule" id="MF_04072"/>
    </source>
</evidence>
<evidence type="ECO:0000305" key="3"/>
<organism>
    <name type="scientific">Influenza A virus (strain A/Brazil/11/1978 H1N1)</name>
    <dbReference type="NCBI Taxonomy" id="393560"/>
    <lineage>
        <taxon>Viruses</taxon>
        <taxon>Riboviria</taxon>
        <taxon>Orthornavirae</taxon>
        <taxon>Negarnaviricota</taxon>
        <taxon>Polyploviricotina</taxon>
        <taxon>Insthoviricetes</taxon>
        <taxon>Articulavirales</taxon>
        <taxon>Orthomyxoviridae</taxon>
        <taxon>Alphainfluenzavirus</taxon>
        <taxon>Alphainfluenzavirus influenzae</taxon>
        <taxon>Influenza A virus</taxon>
    </lineage>
</organism>
<comment type="function">
    <text evidence="2">Binds to sialic acid-containing receptors on the cell surface, bringing about the attachment of the virus particle to the cell. This attachment induces virion internalization either through clathrin-dependent endocytosis or through clathrin- and caveolin-independent pathway. Plays a major role in the determination of host range restriction and virulence. Class I viral fusion protein. Responsible for penetration of the virus into the cell cytoplasm by mediating the fusion of the membrane of the endocytosed virus particle with the endosomal membrane. Low pH in endosomes induces an irreversible conformational change in HA2, releasing the fusion hydrophobic peptide. Several trimers are required to form a competent fusion pore.</text>
</comment>
<comment type="subunit">
    <text evidence="1">Homotrimer of disulfide-linked HA1-HA2. Interacts with human CACNA1C.</text>
</comment>
<comment type="subcellular location">
    <subcellularLocation>
        <location evidence="2">Virion membrane</location>
        <topology evidence="2">Single-pass type I membrane protein</topology>
    </subcellularLocation>
    <subcellularLocation>
        <location evidence="2">Host apical cell membrane</location>
        <topology evidence="2">Single-pass type I membrane protein</topology>
    </subcellularLocation>
    <text evidence="2">Targeted to the apical plasma membrane in epithelial polarized cells through a signal present in the transmembrane domain. Associated with glycosphingolipid- and cholesterol-enriched detergent-resistant lipid rafts.</text>
</comment>
<comment type="PTM">
    <text evidence="2">Palmitoylated.</text>
</comment>
<comment type="PTM">
    <text evidence="2">In natural infection, inactive HA is matured into HA1 and HA2 outside the cell by one or more trypsin-like, arginine-specific endoprotease secreted by the bronchial epithelial cells. One identified protease that may be involved in this process is secreted in lungs by club cells.</text>
</comment>
<comment type="miscellaneous">
    <text>Major glycoprotein, comprises over 80% of the envelope proteins present in virus particle.</text>
</comment>
<comment type="miscellaneous">
    <text>The extent of infection into host organism is determined by HA. Influenza viruses bud from the apical surface of polarized epithelial cells (e.g. bronchial epithelial cells) into lumen of lungs and are therefore usually pneumotropic. The reason is that HA is cleaved by tryptase clara which is restricted to lungs. However, HAs of H5 and H7 pantropic avian viruses subtypes can be cleaved by furin and subtilisin-type enzymes, allowing the virus to grow in other organs than lungs.</text>
</comment>
<comment type="miscellaneous">
    <text evidence="3">The influenza A genome consist of 8 RNA segments. Genetic variation of hemagglutinin and/or neuraminidase genes results in the emergence of new influenza strains. The mechanism of variation can be the result of point mutations or the result of genetic reassortment between segments of two different strains.</text>
</comment>
<comment type="similarity">
    <text evidence="2">Belongs to the influenza viruses hemagglutinin family.</text>
</comment>
<name>HEMA_I77AA</name>
<reference key="1">
    <citation type="submission" date="2007-03" db="EMBL/GenBank/DDBJ databases">
        <title>The NIAID influenza genome sequencing project.</title>
        <authorList>
            <person name="Ghedin E."/>
            <person name="Spiro D."/>
            <person name="Miller N."/>
            <person name="Zaborsky J."/>
            <person name="Feldblyum T."/>
            <person name="Subbu V."/>
            <person name="Shumway M."/>
            <person name="Sparenborg J."/>
            <person name="Groveman L."/>
            <person name="Halpin R."/>
            <person name="Sitz J."/>
            <person name="Koo H."/>
            <person name="Salzberg S.L."/>
            <person name="Webster R.G."/>
            <person name="Hoffmann E."/>
            <person name="Krauss S."/>
            <person name="Naeve C."/>
            <person name="Bao Y."/>
            <person name="Bolotov P."/>
            <person name="Dernovoy D."/>
            <person name="Kiryutin B."/>
            <person name="Lipman D.J."/>
            <person name="Tatusova T."/>
        </authorList>
    </citation>
    <scope>NUCLEOTIDE SEQUENCE [GENOMIC RNA]</scope>
</reference>
<reference key="2">
    <citation type="submission" date="2007-03" db="EMBL/GenBank/DDBJ databases">
        <authorList>
            <consortium name="The NIAID Influenza Genome Sequencing Consortium"/>
        </authorList>
    </citation>
    <scope>NUCLEOTIDE SEQUENCE [GENOMIC RNA]</scope>
</reference>
<accession>A4GBX7</accession>
<organismHost>
    <name type="scientific">Aves</name>
    <dbReference type="NCBI Taxonomy" id="8782"/>
</organismHost>
<organismHost>
    <name type="scientific">Homo sapiens</name>
    <name type="common">Human</name>
    <dbReference type="NCBI Taxonomy" id="9606"/>
</organismHost>
<organismHost>
    <name type="scientific">Sus scrofa</name>
    <name type="common">Pig</name>
    <dbReference type="NCBI Taxonomy" id="9823"/>
</organismHost>
<dbReference type="EMBL" id="CY020293">
    <property type="protein sequence ID" value="ABO38065.1"/>
    <property type="molecule type" value="Viral_cRNA"/>
</dbReference>
<dbReference type="BMRB" id="A4GBX7"/>
<dbReference type="SMR" id="A4GBX7"/>
<dbReference type="GlyCosmos" id="A4GBX7">
    <property type="glycosylation" value="10 sites, No reported glycans"/>
</dbReference>
<dbReference type="PRO" id="PR:A4GBX7"/>
<dbReference type="Proteomes" id="UP000008025">
    <property type="component" value="Genome"/>
</dbReference>
<dbReference type="GO" id="GO:0020002">
    <property type="term" value="C:host cell plasma membrane"/>
    <property type="evidence" value="ECO:0007669"/>
    <property type="project" value="UniProtKB-SubCell"/>
</dbReference>
<dbReference type="GO" id="GO:0016020">
    <property type="term" value="C:membrane"/>
    <property type="evidence" value="ECO:0007669"/>
    <property type="project" value="UniProtKB-UniRule"/>
</dbReference>
<dbReference type="GO" id="GO:0019031">
    <property type="term" value="C:viral envelope"/>
    <property type="evidence" value="ECO:0007669"/>
    <property type="project" value="UniProtKB-UniRule"/>
</dbReference>
<dbReference type="GO" id="GO:0055036">
    <property type="term" value="C:virion membrane"/>
    <property type="evidence" value="ECO:0007669"/>
    <property type="project" value="UniProtKB-SubCell"/>
</dbReference>
<dbReference type="GO" id="GO:0046789">
    <property type="term" value="F:host cell surface receptor binding"/>
    <property type="evidence" value="ECO:0007669"/>
    <property type="project" value="UniProtKB-UniRule"/>
</dbReference>
<dbReference type="GO" id="GO:0075512">
    <property type="term" value="P:clathrin-dependent endocytosis of virus by host cell"/>
    <property type="evidence" value="ECO:0007669"/>
    <property type="project" value="UniProtKB-UniRule"/>
</dbReference>
<dbReference type="GO" id="GO:0039654">
    <property type="term" value="P:fusion of virus membrane with host endosome membrane"/>
    <property type="evidence" value="ECO:0007669"/>
    <property type="project" value="UniProtKB-UniRule"/>
</dbReference>
<dbReference type="GO" id="GO:0019064">
    <property type="term" value="P:fusion of virus membrane with host plasma membrane"/>
    <property type="evidence" value="ECO:0007669"/>
    <property type="project" value="InterPro"/>
</dbReference>
<dbReference type="GO" id="GO:0046761">
    <property type="term" value="P:viral budding from plasma membrane"/>
    <property type="evidence" value="ECO:0007669"/>
    <property type="project" value="UniProtKB-UniRule"/>
</dbReference>
<dbReference type="GO" id="GO:0019062">
    <property type="term" value="P:virion attachment to host cell"/>
    <property type="evidence" value="ECO:0007669"/>
    <property type="project" value="UniProtKB-KW"/>
</dbReference>
<dbReference type="FunFam" id="3.90.20.10:FF:000002">
    <property type="entry name" value="Hemagglutinin"/>
    <property type="match status" value="1"/>
</dbReference>
<dbReference type="Gene3D" id="3.90.20.10">
    <property type="match status" value="1"/>
</dbReference>
<dbReference type="Gene3D" id="3.90.209.20">
    <property type="match status" value="1"/>
</dbReference>
<dbReference type="Gene3D" id="2.10.77.10">
    <property type="entry name" value="Hemagglutinin Chain A, Domain 2"/>
    <property type="match status" value="1"/>
</dbReference>
<dbReference type="HAMAP" id="MF_04072">
    <property type="entry name" value="INFV_HEMA"/>
    <property type="match status" value="1"/>
</dbReference>
<dbReference type="InterPro" id="IPR008980">
    <property type="entry name" value="Capsid_hemagglutn"/>
</dbReference>
<dbReference type="InterPro" id="IPR013828">
    <property type="entry name" value="Hemagglutn_HA1_a/b_dom_sf"/>
</dbReference>
<dbReference type="InterPro" id="IPR000149">
    <property type="entry name" value="Hemagglutn_influenz_A"/>
</dbReference>
<dbReference type="InterPro" id="IPR001364">
    <property type="entry name" value="Hemagglutn_influenz_A/B"/>
</dbReference>
<dbReference type="Pfam" id="PF00509">
    <property type="entry name" value="Hemagglutinin"/>
    <property type="match status" value="1"/>
</dbReference>
<dbReference type="PRINTS" id="PR00330">
    <property type="entry name" value="HEMAGGLUTN1"/>
</dbReference>
<dbReference type="PRINTS" id="PR00329">
    <property type="entry name" value="HEMAGGLUTN12"/>
</dbReference>
<dbReference type="SUPFAM" id="SSF58064">
    <property type="entry name" value="Influenza hemagglutinin (stalk)"/>
    <property type="match status" value="1"/>
</dbReference>
<dbReference type="SUPFAM" id="SSF49818">
    <property type="entry name" value="Viral protein domain"/>
    <property type="match status" value="1"/>
</dbReference>
<keyword id="KW-1167">Clathrin- and caveolin-independent endocytosis of virus by host</keyword>
<keyword id="KW-1165">Clathrin-mediated endocytosis of virus by host</keyword>
<keyword id="KW-1015">Disulfide bond</keyword>
<keyword id="KW-1170">Fusion of virus membrane with host endosomal membrane</keyword>
<keyword id="KW-1168">Fusion of virus membrane with host membrane</keyword>
<keyword id="KW-0325">Glycoprotein</keyword>
<keyword id="KW-0348">Hemagglutinin</keyword>
<keyword id="KW-1032">Host cell membrane</keyword>
<keyword id="KW-1043">Host membrane</keyword>
<keyword id="KW-0945">Host-virus interaction</keyword>
<keyword id="KW-0449">Lipoprotein</keyword>
<keyword id="KW-0472">Membrane</keyword>
<keyword id="KW-0564">Palmitate</keyword>
<keyword id="KW-0732">Signal</keyword>
<keyword id="KW-0812">Transmembrane</keyword>
<keyword id="KW-1133">Transmembrane helix</keyword>
<keyword id="KW-1161">Viral attachment to host cell</keyword>
<keyword id="KW-0261">Viral envelope protein</keyword>
<keyword id="KW-1162">Viral penetration into host cytoplasm</keyword>
<keyword id="KW-0946">Virion</keyword>
<keyword id="KW-1164">Virus endocytosis by host</keyword>
<keyword id="KW-1160">Virus entry into host cell</keyword>
<sequence length="566" mass="63616">MKAKLLVLLCALSATDADTICIGYHANNSTDTVDTVLEKNVTVTHSVNLLEDSHNGKLCRLKGIAPLQLGKCSIAGWILGNPECESLFSKKSWSYIAETPNSENGTCYPGYFADYEELREQLSSVSSFERFEIFPKERSWPKHNITRGVTASCSHKGKSSFYRNLLWLTEKNGSYPNLSKSYVNNKEKEVLVLWGVHHPSNIEDQKTIYRKENAYVSVVSSNYNRRFTPEIAKRPKVRGQEGRINYYWTLLEPGDTIIFEANGNLIAPWYAFALSRGFGSGIITSNASMDECDTKCQTPQGAINSSLPFQNVHPVTIGECPKYVRSTKLRMVTGLRNIPSIQSRGLFGAIAGFIEGGWTGMIDGWYGYHHQNEQGSGYAADQKSTQNAINGITNKVNSVIEKMNTQFTAVGKEFNKLEKRMENLNKKVDDGFLDIWTYNAELLVLLENERTLDFHDSNVKNLYEKVKSQLKNNAKEIGNGCFEFYHKCNNECMESVKNGTYDYPKYSEESKLNREKIDGVKLESMGVYQILAIYSTVASSLVLLVSLGAISFWMCSNGSLQCRICI</sequence>
<proteinExistence type="inferred from homology"/>